<keyword id="KW-0539">Nucleus</keyword>
<keyword id="KW-1185">Reference proteome</keyword>
<name>YL363_YEAST</name>
<dbReference type="EMBL" id="U19103">
    <property type="status" value="NOT_ANNOTATED_CDS"/>
    <property type="molecule type" value="Genomic_DNA"/>
</dbReference>
<dbReference type="EMBL" id="BK006945">
    <property type="protein sequence ID" value="DAA09668.1"/>
    <property type="molecule type" value="Genomic_DNA"/>
</dbReference>
<dbReference type="RefSeq" id="NP_076903.1">
    <property type="nucleotide sequence ID" value="NM_001184486.1"/>
</dbReference>
<dbReference type="SMR" id="Q3E747"/>
<dbReference type="BioGRID" id="31625">
    <property type="interactions" value="76"/>
</dbReference>
<dbReference type="FunCoup" id="Q3E747">
    <property type="interactions" value="67"/>
</dbReference>
<dbReference type="IntAct" id="Q3E747">
    <property type="interactions" value="1"/>
</dbReference>
<dbReference type="MINT" id="Q3E747"/>
<dbReference type="STRING" id="4932.YLR363W-A"/>
<dbReference type="iPTMnet" id="Q3E747"/>
<dbReference type="PaxDb" id="4932-YLR363W-A"/>
<dbReference type="PeptideAtlas" id="Q3E747"/>
<dbReference type="EnsemblFungi" id="YLR363W-A_mRNA">
    <property type="protein sequence ID" value="YLR363W-A"/>
    <property type="gene ID" value="YLR363W-A"/>
</dbReference>
<dbReference type="GeneID" id="851078"/>
<dbReference type="KEGG" id="sce:YLR363W-A"/>
<dbReference type="AGR" id="SGD:S000007620"/>
<dbReference type="SGD" id="S000007620">
    <property type="gene designation" value="YLR363W-A"/>
</dbReference>
<dbReference type="VEuPathDB" id="FungiDB:YLR363W-A"/>
<dbReference type="eggNOG" id="ENOG502S53E">
    <property type="taxonomic scope" value="Eukaryota"/>
</dbReference>
<dbReference type="HOGENOM" id="CLU_157438_0_0_1"/>
<dbReference type="InParanoid" id="Q3E747"/>
<dbReference type="OMA" id="KKSLQHM"/>
<dbReference type="OrthoDB" id="5239630at2759"/>
<dbReference type="BioCyc" id="YEAST:G3O-32571-MONOMER"/>
<dbReference type="BioGRID-ORCS" id="851078">
    <property type="hits" value="1 hit in 10 CRISPR screens"/>
</dbReference>
<dbReference type="ChiTaRS" id="YLR363W-A">
    <property type="organism name" value="yeast"/>
</dbReference>
<dbReference type="PRO" id="PR:Q3E747"/>
<dbReference type="Proteomes" id="UP000002311">
    <property type="component" value="Chromosome XII"/>
</dbReference>
<dbReference type="RNAct" id="Q3E747">
    <property type="molecule type" value="protein"/>
</dbReference>
<dbReference type="GO" id="GO:0005634">
    <property type="term" value="C:nucleus"/>
    <property type="evidence" value="ECO:0007005"/>
    <property type="project" value="SGD"/>
</dbReference>
<dbReference type="InterPro" id="IPR019034">
    <property type="entry name" value="UPF0390"/>
</dbReference>
<dbReference type="Pfam" id="PF09495">
    <property type="entry name" value="DUF2462"/>
    <property type="match status" value="1"/>
</dbReference>
<proteinExistence type="evidence at protein level"/>
<comment type="subcellular location">
    <subcellularLocation>
        <location evidence="2">Nucleus</location>
    </subcellularLocation>
</comment>
<comment type="miscellaneous">
    <text evidence="3">Present with 6650 molecules/cell in log phase SD medium.</text>
</comment>
<sequence>MPQKPLKVTKKAKDPRRVTKKQKNLRKAAPLQLKSKKKSLQHLKKLKKSSSLTETTERLVASKVGHLELLRGTRKELEKGKKNSK</sequence>
<accession>Q3E747</accession>
<accession>D6VZ02</accession>
<reference key="1">
    <citation type="journal article" date="1997" name="Nature">
        <title>The nucleotide sequence of Saccharomyces cerevisiae chromosome XII.</title>
        <authorList>
            <person name="Johnston M."/>
            <person name="Hillier L.W."/>
            <person name="Riles L."/>
            <person name="Albermann K."/>
            <person name="Andre B."/>
            <person name="Ansorge W."/>
            <person name="Benes V."/>
            <person name="Brueckner M."/>
            <person name="Delius H."/>
            <person name="Dubois E."/>
            <person name="Duesterhoeft A."/>
            <person name="Entian K.-D."/>
            <person name="Floeth M."/>
            <person name="Goffeau A."/>
            <person name="Hebling U."/>
            <person name="Heumann K."/>
            <person name="Heuss-Neitzel D."/>
            <person name="Hilbert H."/>
            <person name="Hilger F."/>
            <person name="Kleine K."/>
            <person name="Koetter P."/>
            <person name="Louis E.J."/>
            <person name="Messenguy F."/>
            <person name="Mewes H.-W."/>
            <person name="Miosga T."/>
            <person name="Moestl D."/>
            <person name="Mueller-Auer S."/>
            <person name="Nentwich U."/>
            <person name="Obermaier B."/>
            <person name="Piravandi E."/>
            <person name="Pohl T.M."/>
            <person name="Portetelle D."/>
            <person name="Purnelle B."/>
            <person name="Rechmann S."/>
            <person name="Rieger M."/>
            <person name="Rinke M."/>
            <person name="Rose M."/>
            <person name="Scharfe M."/>
            <person name="Scherens B."/>
            <person name="Scholler P."/>
            <person name="Schwager C."/>
            <person name="Schwarz S."/>
            <person name="Underwood A.P."/>
            <person name="Urrestarazu L.A."/>
            <person name="Vandenbol M."/>
            <person name="Verhasselt P."/>
            <person name="Vierendeels F."/>
            <person name="Voet M."/>
            <person name="Volckaert G."/>
            <person name="Voss H."/>
            <person name="Wambutt R."/>
            <person name="Wedler E."/>
            <person name="Wedler H."/>
            <person name="Zimmermann F.K."/>
            <person name="Zollner A."/>
            <person name="Hani J."/>
            <person name="Hoheisel J.D."/>
        </authorList>
    </citation>
    <scope>NUCLEOTIDE SEQUENCE [LARGE SCALE GENOMIC DNA]</scope>
    <source>
        <strain>ATCC 204508 / S288c</strain>
    </source>
</reference>
<reference key="2">
    <citation type="journal article" date="2014" name="G3 (Bethesda)">
        <title>The reference genome sequence of Saccharomyces cerevisiae: Then and now.</title>
        <authorList>
            <person name="Engel S.R."/>
            <person name="Dietrich F.S."/>
            <person name="Fisk D.G."/>
            <person name="Binkley G."/>
            <person name="Balakrishnan R."/>
            <person name="Costanzo M.C."/>
            <person name="Dwight S.S."/>
            <person name="Hitz B.C."/>
            <person name="Karra K."/>
            <person name="Nash R.S."/>
            <person name="Weng S."/>
            <person name="Wong E.D."/>
            <person name="Lloyd P."/>
            <person name="Skrzypek M.S."/>
            <person name="Miyasato S.R."/>
            <person name="Simison M."/>
            <person name="Cherry J.M."/>
        </authorList>
    </citation>
    <scope>GENOME REANNOTATION</scope>
    <source>
        <strain>ATCC 204508 / S288c</strain>
    </source>
</reference>
<reference key="3">
    <citation type="journal article" date="2000" name="FEBS Lett.">
        <title>Genomic exploration of the hemiascomycetous yeasts: 4. The genome of Saccharomyces cerevisiae revisited.</title>
        <authorList>
            <person name="Blandin G."/>
            <person name="Durrens P."/>
            <person name="Tekaia F."/>
            <person name="Aigle M."/>
            <person name="Bolotin-Fukuhara M."/>
            <person name="Bon E."/>
            <person name="Casaregola S."/>
            <person name="de Montigny J."/>
            <person name="Gaillardin C."/>
            <person name="Lepingle A."/>
            <person name="Llorente B."/>
            <person name="Malpertuy A."/>
            <person name="Neuveglise C."/>
            <person name="Ozier-Kalogeropoulos O."/>
            <person name="Perrin A."/>
            <person name="Potier S."/>
            <person name="Souciet J.-L."/>
            <person name="Talla E."/>
            <person name="Toffano-Nioche C."/>
            <person name="Wesolowski-Louvel M."/>
            <person name="Marck C."/>
            <person name="Dujon B."/>
        </authorList>
    </citation>
    <scope>GENOME REANNOTATION</scope>
</reference>
<reference key="4">
    <citation type="journal article" date="2003" name="Nature">
        <title>Global analysis of protein localization in budding yeast.</title>
        <authorList>
            <person name="Huh W.-K."/>
            <person name="Falvo J.V."/>
            <person name="Gerke L.C."/>
            <person name="Carroll A.S."/>
            <person name="Howson R.W."/>
            <person name="Weissman J.S."/>
            <person name="O'Shea E.K."/>
        </authorList>
    </citation>
    <scope>SUBCELLULAR LOCATION [LARGE SCALE ANALYSIS]</scope>
</reference>
<reference key="5">
    <citation type="journal article" date="2003" name="Nature">
        <title>Global analysis of protein expression in yeast.</title>
        <authorList>
            <person name="Ghaemmaghami S."/>
            <person name="Huh W.-K."/>
            <person name="Bower K."/>
            <person name="Howson R.W."/>
            <person name="Belle A."/>
            <person name="Dephoure N."/>
            <person name="O'Shea E.K."/>
            <person name="Weissman J.S."/>
        </authorList>
    </citation>
    <scope>LEVEL OF PROTEIN EXPRESSION [LARGE SCALE ANALYSIS]</scope>
</reference>
<reference key="6">
    <citation type="journal article" date="2008" name="Mol. Cell. Proteomics">
        <title>A multidimensional chromatography technology for in-depth phosphoproteome analysis.</title>
        <authorList>
            <person name="Albuquerque C.P."/>
            <person name="Smolka M.B."/>
            <person name="Payne S.H."/>
            <person name="Bafna V."/>
            <person name="Eng J."/>
            <person name="Zhou H."/>
        </authorList>
    </citation>
    <scope>IDENTIFICATION BY MASS SPECTROMETRY [LARGE SCALE ANALYSIS]</scope>
</reference>
<organism>
    <name type="scientific">Saccharomyces cerevisiae (strain ATCC 204508 / S288c)</name>
    <name type="common">Baker's yeast</name>
    <dbReference type="NCBI Taxonomy" id="559292"/>
    <lineage>
        <taxon>Eukaryota</taxon>
        <taxon>Fungi</taxon>
        <taxon>Dikarya</taxon>
        <taxon>Ascomycota</taxon>
        <taxon>Saccharomycotina</taxon>
        <taxon>Saccharomycetes</taxon>
        <taxon>Saccharomycetales</taxon>
        <taxon>Saccharomycetaceae</taxon>
        <taxon>Saccharomyces</taxon>
    </lineage>
</organism>
<protein>
    <recommendedName>
        <fullName>Uncharacterized protein YLR363W-A</fullName>
    </recommendedName>
</protein>
<feature type="chain" id="PRO_0000247215" description="Uncharacterized protein YLR363W-A">
    <location>
        <begin position="1"/>
        <end position="85"/>
    </location>
</feature>
<feature type="region of interest" description="Disordered" evidence="1">
    <location>
        <begin position="1"/>
        <end position="28"/>
    </location>
</feature>
<feature type="region of interest" description="Disordered" evidence="1">
    <location>
        <begin position="35"/>
        <end position="54"/>
    </location>
</feature>
<feature type="compositionally biased region" description="Basic residues" evidence="1">
    <location>
        <begin position="35"/>
        <end position="48"/>
    </location>
</feature>
<gene>
    <name type="ordered locus">YLR363W-A</name>
</gene>
<evidence type="ECO:0000256" key="1">
    <source>
        <dbReference type="SAM" id="MobiDB-lite"/>
    </source>
</evidence>
<evidence type="ECO:0000269" key="2">
    <source>
    </source>
</evidence>
<evidence type="ECO:0000269" key="3">
    <source>
    </source>
</evidence>